<reference key="1">
    <citation type="journal article" date="2002" name="Nature">
        <title>The genome sequence and structure of rice chromosome 1.</title>
        <authorList>
            <person name="Sasaki T."/>
            <person name="Matsumoto T."/>
            <person name="Yamamoto K."/>
            <person name="Sakata K."/>
            <person name="Baba T."/>
            <person name="Katayose Y."/>
            <person name="Wu J."/>
            <person name="Niimura Y."/>
            <person name="Cheng Z."/>
            <person name="Nagamura Y."/>
            <person name="Antonio B.A."/>
            <person name="Kanamori H."/>
            <person name="Hosokawa S."/>
            <person name="Masukawa M."/>
            <person name="Arikawa K."/>
            <person name="Chiden Y."/>
            <person name="Hayashi M."/>
            <person name="Okamoto M."/>
            <person name="Ando T."/>
            <person name="Aoki H."/>
            <person name="Arita K."/>
            <person name="Hamada M."/>
            <person name="Harada C."/>
            <person name="Hijishita S."/>
            <person name="Honda M."/>
            <person name="Ichikawa Y."/>
            <person name="Idonuma A."/>
            <person name="Iijima M."/>
            <person name="Ikeda M."/>
            <person name="Ikeno M."/>
            <person name="Ito S."/>
            <person name="Ito T."/>
            <person name="Ito Y."/>
            <person name="Ito Y."/>
            <person name="Iwabuchi A."/>
            <person name="Kamiya K."/>
            <person name="Karasawa W."/>
            <person name="Katagiri S."/>
            <person name="Kikuta A."/>
            <person name="Kobayashi N."/>
            <person name="Kono I."/>
            <person name="Machita K."/>
            <person name="Maehara T."/>
            <person name="Mizuno H."/>
            <person name="Mizubayashi T."/>
            <person name="Mukai Y."/>
            <person name="Nagasaki H."/>
            <person name="Nakashima M."/>
            <person name="Nakama Y."/>
            <person name="Nakamichi Y."/>
            <person name="Nakamura M."/>
            <person name="Namiki N."/>
            <person name="Negishi M."/>
            <person name="Ohta I."/>
            <person name="Ono N."/>
            <person name="Saji S."/>
            <person name="Sakai K."/>
            <person name="Shibata M."/>
            <person name="Shimokawa T."/>
            <person name="Shomura A."/>
            <person name="Song J."/>
            <person name="Takazaki Y."/>
            <person name="Terasawa K."/>
            <person name="Tsuji K."/>
            <person name="Waki K."/>
            <person name="Yamagata H."/>
            <person name="Yamane H."/>
            <person name="Yoshiki S."/>
            <person name="Yoshihara R."/>
            <person name="Yukawa K."/>
            <person name="Zhong H."/>
            <person name="Iwama H."/>
            <person name="Endo T."/>
            <person name="Ito H."/>
            <person name="Hahn J.H."/>
            <person name="Kim H.-I."/>
            <person name="Eun M.-Y."/>
            <person name="Yano M."/>
            <person name="Jiang J."/>
            <person name="Gojobori T."/>
        </authorList>
    </citation>
    <scope>NUCLEOTIDE SEQUENCE [LARGE SCALE GENOMIC DNA]</scope>
    <source>
        <strain>cv. Nipponbare</strain>
    </source>
</reference>
<reference key="2">
    <citation type="journal article" date="2005" name="Nature">
        <title>The map-based sequence of the rice genome.</title>
        <authorList>
            <consortium name="International rice genome sequencing project (IRGSP)"/>
        </authorList>
    </citation>
    <scope>NUCLEOTIDE SEQUENCE [LARGE SCALE GENOMIC DNA]</scope>
    <source>
        <strain>cv. Nipponbare</strain>
    </source>
</reference>
<reference key="3">
    <citation type="journal article" date="2008" name="Nucleic Acids Res.">
        <title>The rice annotation project database (RAP-DB): 2008 update.</title>
        <authorList>
            <consortium name="The rice annotation project (RAP)"/>
        </authorList>
    </citation>
    <scope>GENOME REANNOTATION</scope>
    <source>
        <strain>cv. Nipponbare</strain>
    </source>
</reference>
<reference key="4">
    <citation type="journal article" date="2013" name="Rice">
        <title>Improvement of the Oryza sativa Nipponbare reference genome using next generation sequence and optical map data.</title>
        <authorList>
            <person name="Kawahara Y."/>
            <person name="de la Bastide M."/>
            <person name="Hamilton J.P."/>
            <person name="Kanamori H."/>
            <person name="McCombie W.R."/>
            <person name="Ouyang S."/>
            <person name="Schwartz D.C."/>
            <person name="Tanaka T."/>
            <person name="Wu J."/>
            <person name="Zhou S."/>
            <person name="Childs K.L."/>
            <person name="Davidson R.M."/>
            <person name="Lin H."/>
            <person name="Quesada-Ocampo L."/>
            <person name="Vaillancourt B."/>
            <person name="Sakai H."/>
            <person name="Lee S.S."/>
            <person name="Kim J."/>
            <person name="Numa H."/>
            <person name="Itoh T."/>
            <person name="Buell C.R."/>
            <person name="Matsumoto T."/>
        </authorList>
    </citation>
    <scope>GENOME REANNOTATION</scope>
    <source>
        <strain>cv. Nipponbare</strain>
    </source>
</reference>
<reference key="5">
    <citation type="journal article" date="2003" name="Science">
        <title>Collection, mapping, and annotation of over 28,000 cDNA clones from japonica rice.</title>
        <authorList>
            <consortium name="The rice full-length cDNA consortium"/>
        </authorList>
    </citation>
    <scope>NUCLEOTIDE SEQUENCE [LARGE SCALE MRNA] (ISOFORMS 1 AND 2)</scope>
    <source>
        <strain>cv. Nipponbare</strain>
    </source>
</reference>
<reference key="6">
    <citation type="journal article" date="2008" name="Plant Signal. Behav.">
        <title>Differential expression and phylogenetic analysis suggest specialization of plastid-localized members of the PHT4 phosphate transporter family for photosynthetic and heterotrophic tissues.</title>
        <authorList>
            <person name="Guo B."/>
            <person name="Irigoyen S."/>
            <person name="Fowler T.B."/>
            <person name="Versaw W.K."/>
        </authorList>
    </citation>
    <scope>GENE FAMILY</scope>
    <scope>NOMENCLATURE</scope>
</reference>
<dbReference type="EMBL" id="AP003279">
    <property type="protein sequence ID" value="BAB84388.1"/>
    <property type="molecule type" value="Genomic_DNA"/>
</dbReference>
<dbReference type="EMBL" id="AP003279">
    <property type="protein sequence ID" value="BAD81937.1"/>
    <property type="molecule type" value="Genomic_DNA"/>
</dbReference>
<dbReference type="EMBL" id="AP004072">
    <property type="protein sequence ID" value="BAB92858.1"/>
    <property type="molecule type" value="Genomic_DNA"/>
</dbReference>
<dbReference type="EMBL" id="AP004072">
    <property type="protein sequence ID" value="BAD82655.1"/>
    <property type="molecule type" value="Genomic_DNA"/>
</dbReference>
<dbReference type="EMBL" id="AP008207">
    <property type="protein sequence ID" value="BAF06740.2"/>
    <property type="molecule type" value="Genomic_DNA"/>
</dbReference>
<dbReference type="EMBL" id="AP014957">
    <property type="protein sequence ID" value="BAS75257.1"/>
    <property type="molecule type" value="Genomic_DNA"/>
</dbReference>
<dbReference type="EMBL" id="AK063954">
    <property type="protein sequence ID" value="BAG88934.1"/>
    <property type="molecule type" value="mRNA"/>
</dbReference>
<dbReference type="EMBL" id="AK102621">
    <property type="protein sequence ID" value="BAG95643.1"/>
    <property type="molecule type" value="mRNA"/>
</dbReference>
<dbReference type="RefSeq" id="NP_001392370.1">
    <molecule id="Q8W0H5-1"/>
    <property type="nucleotide sequence ID" value="NM_001405441.1"/>
</dbReference>
<dbReference type="RefSeq" id="XP_015620915.1">
    <property type="nucleotide sequence ID" value="XM_015765429.1"/>
</dbReference>
<dbReference type="SMR" id="Q8W0H5"/>
<dbReference type="FunCoup" id="Q8W0H5">
    <property type="interactions" value="434"/>
</dbReference>
<dbReference type="IntAct" id="Q8W0H5">
    <property type="interactions" value="1"/>
</dbReference>
<dbReference type="STRING" id="39947.Q8W0H5"/>
<dbReference type="PaxDb" id="39947-Q8W0H5"/>
<dbReference type="EnsemblPlants" id="Os01t0852200-03">
    <molecule id="Q8W0H5-1"/>
    <property type="protein sequence ID" value="Os01t0852200-03"/>
    <property type="gene ID" value="Os01g0852200"/>
</dbReference>
<dbReference type="GeneID" id="4324813"/>
<dbReference type="Gramene" id="Os01t0852200-03">
    <molecule id="Q8W0H5-1"/>
    <property type="protein sequence ID" value="Os01t0852200-03"/>
    <property type="gene ID" value="Os01g0852200"/>
</dbReference>
<dbReference type="KEGG" id="dosa:Os01g0852200"/>
<dbReference type="eggNOG" id="KOG2532">
    <property type="taxonomic scope" value="Eukaryota"/>
</dbReference>
<dbReference type="InParanoid" id="Q8W0H5"/>
<dbReference type="OMA" id="FYKHPKD"/>
<dbReference type="OrthoDB" id="2250022at2759"/>
<dbReference type="Proteomes" id="UP000000763">
    <property type="component" value="Chromosome 1"/>
</dbReference>
<dbReference type="Proteomes" id="UP000059680">
    <property type="component" value="Chromosome 1"/>
</dbReference>
<dbReference type="ExpressionAtlas" id="Q8W0H5">
    <property type="expression patterns" value="baseline and differential"/>
</dbReference>
<dbReference type="GO" id="GO:0031969">
    <property type="term" value="C:chloroplast membrane"/>
    <property type="evidence" value="ECO:0007669"/>
    <property type="project" value="UniProtKB-SubCell"/>
</dbReference>
<dbReference type="GO" id="GO:0009536">
    <property type="term" value="C:plastid"/>
    <property type="evidence" value="ECO:0000318"/>
    <property type="project" value="GO_Central"/>
</dbReference>
<dbReference type="GO" id="GO:0005315">
    <property type="term" value="F:phosphate transmembrane transporter activity"/>
    <property type="evidence" value="ECO:0000318"/>
    <property type="project" value="GO_Central"/>
</dbReference>
<dbReference type="GO" id="GO:0006811">
    <property type="term" value="P:monoatomic ion transport"/>
    <property type="evidence" value="ECO:0007669"/>
    <property type="project" value="UniProtKB-KW"/>
</dbReference>
<dbReference type="CDD" id="cd17380">
    <property type="entry name" value="MFS_SLC17A9_like"/>
    <property type="match status" value="1"/>
</dbReference>
<dbReference type="FunFam" id="1.20.1250.20:FF:000131">
    <property type="entry name" value="Probable anion transporter 3, chloroplastic"/>
    <property type="match status" value="1"/>
</dbReference>
<dbReference type="FunFam" id="1.20.1250.20:FF:000142">
    <property type="entry name" value="probable anion transporter 3, chloroplastic"/>
    <property type="match status" value="1"/>
</dbReference>
<dbReference type="Gene3D" id="1.20.1250.20">
    <property type="entry name" value="MFS general substrate transporter like domains"/>
    <property type="match status" value="2"/>
</dbReference>
<dbReference type="InterPro" id="IPR011701">
    <property type="entry name" value="MFS"/>
</dbReference>
<dbReference type="InterPro" id="IPR020846">
    <property type="entry name" value="MFS_dom"/>
</dbReference>
<dbReference type="InterPro" id="IPR050382">
    <property type="entry name" value="MFS_Na/Anion_cotransporter"/>
</dbReference>
<dbReference type="InterPro" id="IPR036259">
    <property type="entry name" value="MFS_trans_sf"/>
</dbReference>
<dbReference type="InterPro" id="IPR044777">
    <property type="entry name" value="SLC17A9-like"/>
</dbReference>
<dbReference type="PANTHER" id="PTHR11662:SF424">
    <property type="entry name" value="ANION TRANSPORTER 4, CHLOROPLASTIC-RELATED"/>
    <property type="match status" value="1"/>
</dbReference>
<dbReference type="PANTHER" id="PTHR11662">
    <property type="entry name" value="SOLUTE CARRIER FAMILY 17"/>
    <property type="match status" value="1"/>
</dbReference>
<dbReference type="Pfam" id="PF07690">
    <property type="entry name" value="MFS_1"/>
    <property type="match status" value="1"/>
</dbReference>
<dbReference type="SUPFAM" id="SSF103473">
    <property type="entry name" value="MFS general substrate transporter"/>
    <property type="match status" value="1"/>
</dbReference>
<dbReference type="PROSITE" id="PS50850">
    <property type="entry name" value="MFS"/>
    <property type="match status" value="1"/>
</dbReference>
<evidence type="ECO:0000250" key="1"/>
<evidence type="ECO:0000255" key="2"/>
<evidence type="ECO:0000256" key="3">
    <source>
        <dbReference type="SAM" id="MobiDB-lite"/>
    </source>
</evidence>
<evidence type="ECO:0000303" key="4">
    <source>
    </source>
</evidence>
<evidence type="ECO:0000305" key="5"/>
<comment type="function">
    <text evidence="1">Probable anion transporter.</text>
</comment>
<comment type="subcellular location">
    <subcellularLocation>
        <location evidence="5">Plastid</location>
        <location evidence="5">Chloroplast membrane</location>
        <topology evidence="5">Multi-pass membrane protein</topology>
    </subcellularLocation>
</comment>
<comment type="alternative products">
    <event type="alternative splicing"/>
    <isoform>
        <id>Q8W0H5-1</id>
        <name>1</name>
        <sequence type="displayed"/>
    </isoform>
    <isoform>
        <id>Q8W0H5-2</id>
        <name>2</name>
        <sequence type="described" ref="VSP_037958"/>
    </isoform>
</comment>
<comment type="similarity">
    <text evidence="5">Belongs to the major facilitator superfamily. Sodium/anion cotransporter (TC 2.A.1.14) family.</text>
</comment>
<sequence length="519" mass="55704">MAPPGQLLPLARSLLPLSAPPFVSGRRRRLPTLVLGRALPPPTWLPHGRLSPAHPLPFAPPRRLSRPPPPATSLPGASPGGGAEAQAVLAEFVTSERVKVAAMLGLALALCNADRVVMSVAIVPLSQAYGWTPSFAGVVQSSFLWGYLVSPIIGGALVDYYGGKRVMAYGVALWSLATFLSPWAAARSLWLFLSTRVLLGMAEGVALPSMNNMVLRWFPRTERSSAVGIAMAGFQLGNTIGLLLSPIIMSRAGIFGPFVIFGLFGFLWVLVWISAISGTPGENAQISAHELDYITRGQKLVKTQSGGERLRKVPPFSKLLSKWPTWALISANAMHSWGYFVILSWMPVYFKTIYHVNLREAAWFSALPWVMMAVLGYVAGVVSDRLIQNGTSITLTRKIMQTIGFVGPGVALLGLNAAKSPVIASAWLTIAVGLKSFGHSGFLVNLQEIAPQYAGVLHGMSNTAGTFAAILGTVGAGFFVDRMGSFRGFLILTSLLYFSSTLFWDIFATGERVDFDGTG</sequence>
<name>PHT43_ORYSJ</name>
<protein>
    <recommendedName>
        <fullName>Probable anion transporter 3, chloroplastic</fullName>
    </recommendedName>
    <alternativeName>
        <fullName>Phosphate transporter 4;3</fullName>
    </alternativeName>
</protein>
<feature type="transit peptide" description="Chloroplast" evidence="2">
    <location>
        <begin position="1"/>
        <end position="76"/>
    </location>
</feature>
<feature type="chain" id="PRO_0000383101" description="Probable anion transporter 3, chloroplastic">
    <location>
        <begin position="77"/>
        <end position="519"/>
    </location>
</feature>
<feature type="transmembrane region" description="Helical" evidence="2">
    <location>
        <begin position="100"/>
        <end position="120"/>
    </location>
</feature>
<feature type="transmembrane region" description="Helical" evidence="2">
    <location>
        <begin position="138"/>
        <end position="158"/>
    </location>
</feature>
<feature type="transmembrane region" description="Helical" evidence="2">
    <location>
        <begin position="166"/>
        <end position="186"/>
    </location>
</feature>
<feature type="transmembrane region" description="Helical" evidence="2">
    <location>
        <begin position="188"/>
        <end position="208"/>
    </location>
</feature>
<feature type="transmembrane region" description="Helical" evidence="2">
    <location>
        <begin position="229"/>
        <end position="249"/>
    </location>
</feature>
<feature type="transmembrane region" description="Helical" evidence="2">
    <location>
        <begin position="253"/>
        <end position="273"/>
    </location>
</feature>
<feature type="transmembrane region" description="Helical" evidence="2">
    <location>
        <begin position="326"/>
        <end position="346"/>
    </location>
</feature>
<feature type="transmembrane region" description="Helical" evidence="2">
    <location>
        <begin position="362"/>
        <end position="382"/>
    </location>
</feature>
<feature type="transmembrane region" description="Helical" evidence="2">
    <location>
        <begin position="403"/>
        <end position="423"/>
    </location>
</feature>
<feature type="transmembrane region" description="Helical" evidence="2">
    <location>
        <begin position="424"/>
        <end position="444"/>
    </location>
</feature>
<feature type="transmembrane region" description="Helical" evidence="2">
    <location>
        <begin position="460"/>
        <end position="480"/>
    </location>
</feature>
<feature type="transmembrane region" description="Helical" evidence="2">
    <location>
        <begin position="488"/>
        <end position="508"/>
    </location>
</feature>
<feature type="region of interest" description="Disordered" evidence="3">
    <location>
        <begin position="56"/>
        <end position="82"/>
    </location>
</feature>
<feature type="compositionally biased region" description="Pro residues" evidence="3">
    <location>
        <begin position="56"/>
        <end position="72"/>
    </location>
</feature>
<feature type="splice variant" id="VSP_037958" description="In isoform 2." evidence="4">
    <location>
        <begin position="1"/>
        <end position="166"/>
    </location>
</feature>
<organism>
    <name type="scientific">Oryza sativa subsp. japonica</name>
    <name type="common">Rice</name>
    <dbReference type="NCBI Taxonomy" id="39947"/>
    <lineage>
        <taxon>Eukaryota</taxon>
        <taxon>Viridiplantae</taxon>
        <taxon>Streptophyta</taxon>
        <taxon>Embryophyta</taxon>
        <taxon>Tracheophyta</taxon>
        <taxon>Spermatophyta</taxon>
        <taxon>Magnoliopsida</taxon>
        <taxon>Liliopsida</taxon>
        <taxon>Poales</taxon>
        <taxon>Poaceae</taxon>
        <taxon>BOP clade</taxon>
        <taxon>Oryzoideae</taxon>
        <taxon>Oryzeae</taxon>
        <taxon>Oryzinae</taxon>
        <taxon>Oryza</taxon>
        <taxon>Oryza sativa</taxon>
    </lineage>
</organism>
<accession>Q8W0H5</accession>
<accession>A0A0N7KE28</accession>
<accession>Q0JHN8</accession>
<accession>Q5N7A9</accession>
<gene>
    <name type="primary">PHT4;3</name>
    <name type="ordered locus">Os01g0852200</name>
    <name type="ordered locus">LOC_Os01g63290</name>
    <name type="ORF">P0529E05.4-1</name>
    <name type="ORF">P0529E05.4-2</name>
    <name type="ORF">P0529H11.39-1</name>
    <name type="ORF">P0529H11.39-2</name>
</gene>
<proteinExistence type="evidence at transcript level"/>
<keyword id="KW-0025">Alternative splicing</keyword>
<keyword id="KW-0150">Chloroplast</keyword>
<keyword id="KW-0406">Ion transport</keyword>
<keyword id="KW-0472">Membrane</keyword>
<keyword id="KW-0934">Plastid</keyword>
<keyword id="KW-1185">Reference proteome</keyword>
<keyword id="KW-0809">Transit peptide</keyword>
<keyword id="KW-0812">Transmembrane</keyword>
<keyword id="KW-1133">Transmembrane helix</keyword>
<keyword id="KW-0813">Transport</keyword>